<reference key="1">
    <citation type="journal article" date="1994" name="Nature">
        <title>Complete DNA sequence of yeast chromosome XI.</title>
        <authorList>
            <person name="Dujon B."/>
            <person name="Alexandraki D."/>
            <person name="Andre B."/>
            <person name="Ansorge W."/>
            <person name="Baladron V."/>
            <person name="Ballesta J.P.G."/>
            <person name="Banrevi A."/>
            <person name="Bolle P.-A."/>
            <person name="Bolotin-Fukuhara M."/>
            <person name="Bossier P."/>
            <person name="Bou G."/>
            <person name="Boyer J."/>
            <person name="Buitrago M.J."/>
            <person name="Cheret G."/>
            <person name="Colleaux L."/>
            <person name="Daignan-Fornier B."/>
            <person name="del Rey F."/>
            <person name="Dion C."/>
            <person name="Domdey H."/>
            <person name="Duesterhoeft A."/>
            <person name="Duesterhus S."/>
            <person name="Entian K.-D."/>
            <person name="Erfle H."/>
            <person name="Esteban P.F."/>
            <person name="Feldmann H."/>
            <person name="Fernandes L."/>
            <person name="Fobo G.M."/>
            <person name="Fritz C."/>
            <person name="Fukuhara H."/>
            <person name="Gabel C."/>
            <person name="Gaillon L."/>
            <person name="Garcia-Cantalejo J.M."/>
            <person name="Garcia-Ramirez J.J."/>
            <person name="Gent M.E."/>
            <person name="Ghazvini M."/>
            <person name="Goffeau A."/>
            <person name="Gonzalez A."/>
            <person name="Grothues D."/>
            <person name="Guerreiro P."/>
            <person name="Hegemann J.H."/>
            <person name="Hewitt N."/>
            <person name="Hilger F."/>
            <person name="Hollenberg C.P."/>
            <person name="Horaitis O."/>
            <person name="Indge K.J."/>
            <person name="Jacquier A."/>
            <person name="James C.M."/>
            <person name="Jauniaux J.-C."/>
            <person name="Jimenez A."/>
            <person name="Keuchel H."/>
            <person name="Kirchrath L."/>
            <person name="Kleine K."/>
            <person name="Koetter P."/>
            <person name="Legrain P."/>
            <person name="Liebl S."/>
            <person name="Louis E.J."/>
            <person name="Maia e Silva A."/>
            <person name="Marck C."/>
            <person name="Monnier A.-L."/>
            <person name="Moestl D."/>
            <person name="Mueller S."/>
            <person name="Obermaier B."/>
            <person name="Oliver S.G."/>
            <person name="Pallier C."/>
            <person name="Pascolo S."/>
            <person name="Pfeiffer F."/>
            <person name="Philippsen P."/>
            <person name="Planta R.J."/>
            <person name="Pohl F.M."/>
            <person name="Pohl T.M."/>
            <person name="Poehlmann R."/>
            <person name="Portetelle D."/>
            <person name="Purnelle B."/>
            <person name="Puzos V."/>
            <person name="Ramezani Rad M."/>
            <person name="Rasmussen S.W."/>
            <person name="Remacha M.A."/>
            <person name="Revuelta J.L."/>
            <person name="Richard G.-F."/>
            <person name="Rieger M."/>
            <person name="Rodrigues-Pousada C."/>
            <person name="Rose M."/>
            <person name="Rupp T."/>
            <person name="Santos M.A."/>
            <person name="Schwager C."/>
            <person name="Sensen C."/>
            <person name="Skala J."/>
            <person name="Soares H."/>
            <person name="Sor F."/>
            <person name="Stegemann J."/>
            <person name="Tettelin H."/>
            <person name="Thierry A."/>
            <person name="Tzermia M."/>
            <person name="Urrestarazu L.A."/>
            <person name="van Dyck L."/>
            <person name="van Vliet-Reedijk J.C."/>
            <person name="Valens M."/>
            <person name="Vandenbol M."/>
            <person name="Vilela C."/>
            <person name="Vissers S."/>
            <person name="von Wettstein D."/>
            <person name="Voss H."/>
            <person name="Wiemann S."/>
            <person name="Xu G."/>
            <person name="Zimmermann J."/>
            <person name="Haasemann M."/>
            <person name="Becker I."/>
            <person name="Mewes H.-W."/>
        </authorList>
    </citation>
    <scope>NUCLEOTIDE SEQUENCE [LARGE SCALE GENOMIC DNA]</scope>
    <source>
        <strain>ATCC 204508 / S288c</strain>
    </source>
</reference>
<reference key="2">
    <citation type="journal article" date="2014" name="G3 (Bethesda)">
        <title>The reference genome sequence of Saccharomyces cerevisiae: Then and now.</title>
        <authorList>
            <person name="Engel S.R."/>
            <person name="Dietrich F.S."/>
            <person name="Fisk D.G."/>
            <person name="Binkley G."/>
            <person name="Balakrishnan R."/>
            <person name="Costanzo M.C."/>
            <person name="Dwight S.S."/>
            <person name="Hitz B.C."/>
            <person name="Karra K."/>
            <person name="Nash R.S."/>
            <person name="Weng S."/>
            <person name="Wong E.D."/>
            <person name="Lloyd P."/>
            <person name="Skrzypek M.S."/>
            <person name="Miyasato S.R."/>
            <person name="Simison M."/>
            <person name="Cherry J.M."/>
        </authorList>
    </citation>
    <scope>GENOME REANNOTATION</scope>
    <source>
        <strain>ATCC 204508 / S288c</strain>
    </source>
</reference>
<reference key="3">
    <citation type="journal article" date="2007" name="Genome Res.">
        <title>Approaching a complete repository of sequence-verified protein-encoding clones for Saccharomyces cerevisiae.</title>
        <authorList>
            <person name="Hu Y."/>
            <person name="Rolfs A."/>
            <person name="Bhullar B."/>
            <person name="Murthy T.V.S."/>
            <person name="Zhu C."/>
            <person name="Berger M.F."/>
            <person name="Camargo A.A."/>
            <person name="Kelley F."/>
            <person name="McCarron S."/>
            <person name="Jepson D."/>
            <person name="Richardson A."/>
            <person name="Raphael J."/>
            <person name="Moreira D."/>
            <person name="Taycher E."/>
            <person name="Zuo D."/>
            <person name="Mohr S."/>
            <person name="Kane M.F."/>
            <person name="Williamson J."/>
            <person name="Simpson A.J.G."/>
            <person name="Bulyk M.L."/>
            <person name="Harlow E."/>
            <person name="Marsischky G."/>
            <person name="Kolodner R.D."/>
            <person name="LaBaer J."/>
        </authorList>
    </citation>
    <scope>NUCLEOTIDE SEQUENCE [GENOMIC DNA]</scope>
    <source>
        <strain>ATCC 204508 / S288c</strain>
    </source>
</reference>
<gene>
    <name type="ordered locus">YKR033C</name>
</gene>
<protein>
    <recommendedName>
        <fullName>Putative uncharacterized protein YKR033C</fullName>
    </recommendedName>
</protein>
<organism>
    <name type="scientific">Saccharomyces cerevisiae (strain ATCC 204508 / S288c)</name>
    <name type="common">Baker's yeast</name>
    <dbReference type="NCBI Taxonomy" id="559292"/>
    <lineage>
        <taxon>Eukaryota</taxon>
        <taxon>Fungi</taxon>
        <taxon>Dikarya</taxon>
        <taxon>Ascomycota</taxon>
        <taxon>Saccharomycotina</taxon>
        <taxon>Saccharomycetes</taxon>
        <taxon>Saccharomycetales</taxon>
        <taxon>Saccharomycetaceae</taxon>
        <taxon>Saccharomyces</taxon>
    </lineage>
</organism>
<feature type="chain" id="PRO_0000203207" description="Putative uncharacterized protein YKR033C">
    <location>
        <begin position="1"/>
        <end position="141"/>
    </location>
</feature>
<proteinExistence type="uncertain"/>
<comment type="miscellaneous">
    <text evidence="1">Partially overlaps DAL80.</text>
</comment>
<comment type="caution">
    <text evidence="2">Product of a dubious gene prediction unlikely to encode a functional protein. Because of that it is not part of the S.cerevisiae S288c complete/reference proteome set.</text>
</comment>
<dbReference type="EMBL" id="Z28258">
    <property type="protein sequence ID" value="CAA82105.1"/>
    <property type="molecule type" value="Genomic_DNA"/>
</dbReference>
<dbReference type="EMBL" id="Z28259">
    <property type="protein sequence ID" value="CAA82108.1"/>
    <property type="molecule type" value="Genomic_DNA"/>
</dbReference>
<dbReference type="EMBL" id="AY558361">
    <property type="protein sequence ID" value="AAS56687.1"/>
    <property type="molecule type" value="Genomic_DNA"/>
</dbReference>
<dbReference type="PIR" id="S38105">
    <property type="entry name" value="S38105"/>
</dbReference>
<dbReference type="IntAct" id="P36128">
    <property type="interactions" value="1"/>
</dbReference>
<dbReference type="PaxDb" id="4932-YKR033C"/>
<dbReference type="EnsemblFungi" id="YKR033C_mRNA">
    <property type="protein sequence ID" value="YKR033C"/>
    <property type="gene ID" value="YKR033C"/>
</dbReference>
<dbReference type="AGR" id="SGD:S000001741"/>
<dbReference type="SGD" id="S000001741">
    <property type="gene designation" value="YKR033C"/>
</dbReference>
<dbReference type="HOGENOM" id="CLU_1826815_0_0_1"/>
<evidence type="ECO:0000305" key="1"/>
<evidence type="ECO:0000305" key="2">
    <source>
    </source>
</evidence>
<sequence>MDPLTINFSRIETFGLFVGNEPPPVVSSLFFLLNILFGSLEWVLALVFTLLLFSFFLFLDLMVSVFKLIGLGSPCNFRKRPHALQRTVPCSSLLHRGVLTVKQFWHVGWSSPSQSSTPAAAESVGEGSFNESLSTILLYII</sequence>
<name>YK13_YEAST</name>
<accession>P36128</accession>